<evidence type="ECO:0000255" key="1">
    <source>
        <dbReference type="HAMAP-Rule" id="MF_01582"/>
    </source>
</evidence>
<gene>
    <name evidence="1" type="primary">sstT</name>
    <name type="ordered locus">C8J_1038</name>
</gene>
<proteinExistence type="inferred from homology"/>
<name>SSTT_CAMJ8</name>
<feature type="chain" id="PRO_1000073612" description="Serine/threonine transporter SstT">
    <location>
        <begin position="1"/>
        <end position="407"/>
    </location>
</feature>
<feature type="transmembrane region" description="Helical" evidence="1">
    <location>
        <begin position="12"/>
        <end position="32"/>
    </location>
</feature>
<feature type="transmembrane region" description="Helical" evidence="1">
    <location>
        <begin position="42"/>
        <end position="62"/>
    </location>
</feature>
<feature type="transmembrane region" description="Helical" evidence="1">
    <location>
        <begin position="81"/>
        <end position="101"/>
    </location>
</feature>
<feature type="transmembrane region" description="Helical" evidence="1">
    <location>
        <begin position="141"/>
        <end position="161"/>
    </location>
</feature>
<feature type="transmembrane region" description="Helical" evidence="1">
    <location>
        <begin position="179"/>
        <end position="199"/>
    </location>
</feature>
<feature type="transmembrane region" description="Helical" evidence="1">
    <location>
        <begin position="218"/>
        <end position="238"/>
    </location>
</feature>
<feature type="transmembrane region" description="Helical" evidence="1">
    <location>
        <begin position="245"/>
        <end position="267"/>
    </location>
</feature>
<feature type="transmembrane region" description="Helical" evidence="1">
    <location>
        <begin position="288"/>
        <end position="308"/>
    </location>
</feature>
<feature type="transmembrane region" description="Helical" evidence="1">
    <location>
        <begin position="330"/>
        <end position="350"/>
    </location>
</feature>
<sequence>MFSKIIQSYAKGNLIVQICIGIVLGILIGISSKEISEIANLLGILFTSALKAIAPMLVFILILTSICTKDFSQSGAKIKNIIILYIVGTFLASACAVLANFFFPVKLVLDGVQTATNSSPTHMSEIFKDLLFKIVDNPINALSSGNYLGILTWAIAGGIALKHCSNEAKQVFIDINEGVLKIVKFIVKLAPFGIFGLVANSVAQTGAQGLLSYVKLLILLVTTMLFVTFVINALIVFFYTRKNPFPLIFICLRHSAFFAFFTRSSAANIPVNMALCAKLGIDKEFYGISIPLGATINMAGAAVTIAILSLTAANTVGIEISLLQAFLLSIIATFAACGASGVAGGSLLLIPLACSLFNIDYDIAMKVVAIGFIIGVIQDSVETALNSSTDVLFTAICSKNELNYNIK</sequence>
<organism>
    <name type="scientific">Campylobacter jejuni subsp. jejuni serotype O:6 (strain 81116 / NCTC 11828)</name>
    <dbReference type="NCBI Taxonomy" id="407148"/>
    <lineage>
        <taxon>Bacteria</taxon>
        <taxon>Pseudomonadati</taxon>
        <taxon>Campylobacterota</taxon>
        <taxon>Epsilonproteobacteria</taxon>
        <taxon>Campylobacterales</taxon>
        <taxon>Campylobacteraceae</taxon>
        <taxon>Campylobacter</taxon>
    </lineage>
</organism>
<protein>
    <recommendedName>
        <fullName evidence="1">Serine/threonine transporter SstT</fullName>
    </recommendedName>
    <alternativeName>
        <fullName evidence="1">Na(+)/serine-threonine symporter</fullName>
    </alternativeName>
</protein>
<comment type="function">
    <text evidence="1">Involved in the import of serine and threonine into the cell, with the concomitant import of sodium (symport system).</text>
</comment>
<comment type="catalytic activity">
    <reaction evidence="1">
        <text>L-serine(in) + Na(+)(in) = L-serine(out) + Na(+)(out)</text>
        <dbReference type="Rhea" id="RHEA:29575"/>
        <dbReference type="ChEBI" id="CHEBI:29101"/>
        <dbReference type="ChEBI" id="CHEBI:33384"/>
    </reaction>
    <physiologicalReaction direction="right-to-left" evidence="1">
        <dbReference type="Rhea" id="RHEA:29577"/>
    </physiologicalReaction>
</comment>
<comment type="catalytic activity">
    <reaction evidence="1">
        <text>L-threonine(in) + Na(+)(in) = L-threonine(out) + Na(+)(out)</text>
        <dbReference type="Rhea" id="RHEA:69999"/>
        <dbReference type="ChEBI" id="CHEBI:29101"/>
        <dbReference type="ChEBI" id="CHEBI:57926"/>
    </reaction>
    <physiologicalReaction direction="right-to-left" evidence="1">
        <dbReference type="Rhea" id="RHEA:70001"/>
    </physiologicalReaction>
</comment>
<comment type="subcellular location">
    <subcellularLocation>
        <location evidence="1">Cell inner membrane</location>
        <topology evidence="1">Multi-pass membrane protein</topology>
    </subcellularLocation>
</comment>
<comment type="similarity">
    <text evidence="1">Belongs to the dicarboxylate/amino acid:cation symporter (DAACS) (TC 2.A.23) family.</text>
</comment>
<accession>A8FMF0</accession>
<reference key="1">
    <citation type="journal article" date="2007" name="J. Bacteriol.">
        <title>The complete genome sequence of Campylobacter jejuni strain 81116 (NCTC11828).</title>
        <authorList>
            <person name="Pearson B.M."/>
            <person name="Gaskin D.J.H."/>
            <person name="Segers R.P.A.M."/>
            <person name="Wells J.M."/>
            <person name="Nuijten P.J.M."/>
            <person name="van Vliet A.H.M."/>
        </authorList>
    </citation>
    <scope>NUCLEOTIDE SEQUENCE [LARGE SCALE GENOMIC DNA]</scope>
    <source>
        <strain>81116 / NCTC 11828</strain>
    </source>
</reference>
<keyword id="KW-0029">Amino-acid transport</keyword>
<keyword id="KW-0997">Cell inner membrane</keyword>
<keyword id="KW-1003">Cell membrane</keyword>
<keyword id="KW-0472">Membrane</keyword>
<keyword id="KW-0769">Symport</keyword>
<keyword id="KW-0812">Transmembrane</keyword>
<keyword id="KW-1133">Transmembrane helix</keyword>
<keyword id="KW-0813">Transport</keyword>
<dbReference type="EMBL" id="CP000814">
    <property type="protein sequence ID" value="ABV52637.1"/>
    <property type="molecule type" value="Genomic_DNA"/>
</dbReference>
<dbReference type="RefSeq" id="WP_002866118.1">
    <property type="nucleotide sequence ID" value="NC_009839.1"/>
</dbReference>
<dbReference type="SMR" id="A8FMF0"/>
<dbReference type="KEGG" id="cju:C8J_1038"/>
<dbReference type="HOGENOM" id="CLU_044581_0_0_7"/>
<dbReference type="GO" id="GO:0005886">
    <property type="term" value="C:plasma membrane"/>
    <property type="evidence" value="ECO:0007669"/>
    <property type="project" value="UniProtKB-SubCell"/>
</dbReference>
<dbReference type="GO" id="GO:0005295">
    <property type="term" value="F:neutral L-amino acid:sodium symporter activity"/>
    <property type="evidence" value="ECO:0007669"/>
    <property type="project" value="TreeGrafter"/>
</dbReference>
<dbReference type="GO" id="GO:0032329">
    <property type="term" value="P:serine transport"/>
    <property type="evidence" value="ECO:0007669"/>
    <property type="project" value="InterPro"/>
</dbReference>
<dbReference type="GO" id="GO:0015826">
    <property type="term" value="P:threonine transport"/>
    <property type="evidence" value="ECO:0007669"/>
    <property type="project" value="InterPro"/>
</dbReference>
<dbReference type="Gene3D" id="1.10.3860.10">
    <property type="entry name" value="Sodium:dicarboxylate symporter"/>
    <property type="match status" value="1"/>
</dbReference>
<dbReference type="HAMAP" id="MF_01582">
    <property type="entry name" value="Ser_Thr_transp_SstT"/>
    <property type="match status" value="1"/>
</dbReference>
<dbReference type="InterPro" id="IPR001991">
    <property type="entry name" value="Na-dicarboxylate_symporter"/>
</dbReference>
<dbReference type="InterPro" id="IPR036458">
    <property type="entry name" value="Na:dicarbo_symporter_sf"/>
</dbReference>
<dbReference type="InterPro" id="IPR023025">
    <property type="entry name" value="Ser_Thr_transp_SstT"/>
</dbReference>
<dbReference type="NCBIfam" id="NF010151">
    <property type="entry name" value="PRK13628.1"/>
    <property type="match status" value="1"/>
</dbReference>
<dbReference type="PANTHER" id="PTHR42865">
    <property type="entry name" value="PROTON/GLUTAMATE-ASPARTATE SYMPORTER"/>
    <property type="match status" value="1"/>
</dbReference>
<dbReference type="PANTHER" id="PTHR42865:SF8">
    <property type="entry name" value="SERINE_THREONINE TRANSPORTER SSTT"/>
    <property type="match status" value="1"/>
</dbReference>
<dbReference type="Pfam" id="PF00375">
    <property type="entry name" value="SDF"/>
    <property type="match status" value="1"/>
</dbReference>
<dbReference type="PRINTS" id="PR00173">
    <property type="entry name" value="EDTRNSPORT"/>
</dbReference>
<dbReference type="SUPFAM" id="SSF118215">
    <property type="entry name" value="Proton glutamate symport protein"/>
    <property type="match status" value="1"/>
</dbReference>